<keyword id="KW-1267">Proteomics identification</keyword>
<keyword id="KW-1185">Reference proteome</keyword>
<keyword id="KW-0732">Signal</keyword>
<protein>
    <recommendedName>
        <fullName evidence="2">Uncharacterized protein C3orf85</fullName>
    </recommendedName>
</protein>
<name>CC085_HUMAN</name>
<dbReference type="EMBL" id="AC063923">
    <property type="status" value="NOT_ANNOTATED_CDS"/>
    <property type="molecule type" value="Genomic_DNA"/>
</dbReference>
<dbReference type="EMBL" id="KF457669">
    <property type="status" value="NOT_ANNOTATED_CDS"/>
    <property type="molecule type" value="Genomic_DNA"/>
</dbReference>
<dbReference type="CCDS" id="CCDS87119.1"/>
<dbReference type="RefSeq" id="NP_001338551.1">
    <property type="nucleotide sequence ID" value="NM_001351622.2"/>
</dbReference>
<dbReference type="FunCoup" id="A0A1B0GTC6">
    <property type="interactions" value="1"/>
</dbReference>
<dbReference type="BioMuta" id="C3orf85"/>
<dbReference type="MassIVE" id="A0A1B0GTC6"/>
<dbReference type="PeptideAtlas" id="A0A1B0GTC6"/>
<dbReference type="Ensembl" id="ENST00000622536.6">
    <property type="protein sequence ID" value="ENSP00000489642.1"/>
    <property type="gene ID" value="ENSG00000241224.8"/>
</dbReference>
<dbReference type="GeneID" id="401081"/>
<dbReference type="MANE-Select" id="ENST00000622536.6">
    <property type="protein sequence ID" value="ENSP00000489642.1"/>
    <property type="RefSeq nucleotide sequence ID" value="NM_001351622.2"/>
    <property type="RefSeq protein sequence ID" value="NP_001338551.1"/>
</dbReference>
<dbReference type="AGR" id="HGNC:53432"/>
<dbReference type="GeneCards" id="C3orf85"/>
<dbReference type="HGNC" id="HGNC:53432">
    <property type="gene designation" value="C3orf85"/>
</dbReference>
<dbReference type="HPA" id="ENSG00000241224">
    <property type="expression patterns" value="Tissue enhanced (intestine, kidney, liver)"/>
</dbReference>
<dbReference type="neXtProt" id="NX_A0A1B0GTC6"/>
<dbReference type="OpenTargets" id="ENSG00000241224"/>
<dbReference type="VEuPathDB" id="HostDB:ENSG00000241224"/>
<dbReference type="GeneTree" id="ENSGT00950000183224"/>
<dbReference type="InParanoid" id="A0A1B0GTC6"/>
<dbReference type="OMA" id="GYTIQEQ"/>
<dbReference type="OrthoDB" id="9931701at2759"/>
<dbReference type="PAN-GO" id="A0A1B0GTC6">
    <property type="GO annotations" value="0 GO annotations based on evolutionary models"/>
</dbReference>
<dbReference type="Pharos" id="A0A1B0GTC6">
    <property type="development level" value="Tdark"/>
</dbReference>
<dbReference type="PRO" id="PR:A0A1B0GTC6"/>
<dbReference type="Proteomes" id="UP000005640">
    <property type="component" value="Chromosome 3"/>
</dbReference>
<dbReference type="RNAct" id="A0A1B0GTC6">
    <property type="molecule type" value="protein"/>
</dbReference>
<dbReference type="Bgee" id="ENSG00000241224">
    <property type="expression patterns" value="Expressed in jejunal mucosa and 57 other cell types or tissues"/>
</dbReference>
<dbReference type="ExpressionAtlas" id="A0A1B0GTC6">
    <property type="expression patterns" value="baseline and differential"/>
</dbReference>
<evidence type="ECO:0000255" key="1"/>
<evidence type="ECO:0000305" key="2"/>
<evidence type="ECO:0000312" key="3">
    <source>
        <dbReference type="HGNC" id="HGNC:53432"/>
    </source>
</evidence>
<gene>
    <name evidence="3" type="primary">C3orf85</name>
</gene>
<reference key="1">
    <citation type="journal article" date="2006" name="Nature">
        <title>The DNA sequence, annotation and analysis of human chromosome 3.</title>
        <authorList>
            <person name="Muzny D.M."/>
            <person name="Scherer S.E."/>
            <person name="Kaul R."/>
            <person name="Wang J."/>
            <person name="Yu J."/>
            <person name="Sudbrak R."/>
            <person name="Buhay C.J."/>
            <person name="Chen R."/>
            <person name="Cree A."/>
            <person name="Ding Y."/>
            <person name="Dugan-Rocha S."/>
            <person name="Gill R."/>
            <person name="Gunaratne P."/>
            <person name="Harris R.A."/>
            <person name="Hawes A.C."/>
            <person name="Hernandez J."/>
            <person name="Hodgson A.V."/>
            <person name="Hume J."/>
            <person name="Jackson A."/>
            <person name="Khan Z.M."/>
            <person name="Kovar-Smith C."/>
            <person name="Lewis L.R."/>
            <person name="Lozado R.J."/>
            <person name="Metzker M.L."/>
            <person name="Milosavljevic A."/>
            <person name="Miner G.R."/>
            <person name="Morgan M.B."/>
            <person name="Nazareth L.V."/>
            <person name="Scott G."/>
            <person name="Sodergren E."/>
            <person name="Song X.-Z."/>
            <person name="Steffen D."/>
            <person name="Wei S."/>
            <person name="Wheeler D.A."/>
            <person name="Wright M.W."/>
            <person name="Worley K.C."/>
            <person name="Yuan Y."/>
            <person name="Zhang Z."/>
            <person name="Adams C.Q."/>
            <person name="Ansari-Lari M.A."/>
            <person name="Ayele M."/>
            <person name="Brown M.J."/>
            <person name="Chen G."/>
            <person name="Chen Z."/>
            <person name="Clendenning J."/>
            <person name="Clerc-Blankenburg K.P."/>
            <person name="Chen R."/>
            <person name="Chen Z."/>
            <person name="Davis C."/>
            <person name="Delgado O."/>
            <person name="Dinh H.H."/>
            <person name="Dong W."/>
            <person name="Draper H."/>
            <person name="Ernst S."/>
            <person name="Fu G."/>
            <person name="Gonzalez-Garay M.L."/>
            <person name="Garcia D.K."/>
            <person name="Gillett W."/>
            <person name="Gu J."/>
            <person name="Hao B."/>
            <person name="Haugen E."/>
            <person name="Havlak P."/>
            <person name="He X."/>
            <person name="Hennig S."/>
            <person name="Hu S."/>
            <person name="Huang W."/>
            <person name="Jackson L.R."/>
            <person name="Jacob L.S."/>
            <person name="Kelly S.H."/>
            <person name="Kube M."/>
            <person name="Levy R."/>
            <person name="Li Z."/>
            <person name="Liu B."/>
            <person name="Liu J."/>
            <person name="Liu W."/>
            <person name="Lu J."/>
            <person name="Maheshwari M."/>
            <person name="Nguyen B.-V."/>
            <person name="Okwuonu G.O."/>
            <person name="Palmeiri A."/>
            <person name="Pasternak S."/>
            <person name="Perez L.M."/>
            <person name="Phelps K.A."/>
            <person name="Plopper F.J."/>
            <person name="Qiang B."/>
            <person name="Raymond C."/>
            <person name="Rodriguez R."/>
            <person name="Saenphimmachak C."/>
            <person name="Santibanez J."/>
            <person name="Shen H."/>
            <person name="Shen Y."/>
            <person name="Subramanian S."/>
            <person name="Tabor P.E."/>
            <person name="Verduzco D."/>
            <person name="Waldron L."/>
            <person name="Wang J."/>
            <person name="Wang J."/>
            <person name="Wang Q."/>
            <person name="Williams G.A."/>
            <person name="Wong G.K.-S."/>
            <person name="Yao Z."/>
            <person name="Zhang J."/>
            <person name="Zhang X."/>
            <person name="Zhao G."/>
            <person name="Zhou J."/>
            <person name="Zhou Y."/>
            <person name="Nelson D."/>
            <person name="Lehrach H."/>
            <person name="Reinhardt R."/>
            <person name="Naylor S.L."/>
            <person name="Yang H."/>
            <person name="Olson M."/>
            <person name="Weinstock G."/>
            <person name="Gibbs R.A."/>
        </authorList>
    </citation>
    <scope>NUCLEOTIDE SEQUENCE [LARGE SCALE GENOMIC DNA]</scope>
</reference>
<feature type="signal peptide" evidence="1">
    <location>
        <begin position="1"/>
        <end position="20"/>
    </location>
</feature>
<feature type="chain" id="PRO_5008408604" description="Uncharacterized protein C3orf85" evidence="1">
    <location>
        <begin position="21"/>
        <end position="90"/>
    </location>
</feature>
<organism>
    <name type="scientific">Homo sapiens</name>
    <name type="common">Human</name>
    <dbReference type="NCBI Taxonomy" id="9606"/>
    <lineage>
        <taxon>Eukaryota</taxon>
        <taxon>Metazoa</taxon>
        <taxon>Chordata</taxon>
        <taxon>Craniata</taxon>
        <taxon>Vertebrata</taxon>
        <taxon>Euteleostomi</taxon>
        <taxon>Mammalia</taxon>
        <taxon>Eutheria</taxon>
        <taxon>Euarchontoglires</taxon>
        <taxon>Primates</taxon>
        <taxon>Haplorrhini</taxon>
        <taxon>Catarrhini</taxon>
        <taxon>Hominidae</taxon>
        <taxon>Homo</taxon>
    </lineage>
</organism>
<sequence>MAYKMLQVVLCSTLLIGALGAPFLLEDPANQFLRLKRHVNLQDYWDPDHSSDVWVNTLAKQARETWIALKTTAQYYLDMNTFTFDMSTAQ</sequence>
<proteinExistence type="evidence at protein level"/>
<accession>A0A1B0GTC6</accession>